<evidence type="ECO:0000255" key="1">
    <source>
        <dbReference type="HAMAP-Rule" id="MF_00259"/>
    </source>
</evidence>
<dbReference type="EC" id="2.1.2.10" evidence="1"/>
<dbReference type="EMBL" id="CP000097">
    <property type="protein sequence ID" value="ABB27190.1"/>
    <property type="molecule type" value="Genomic_DNA"/>
</dbReference>
<dbReference type="RefSeq" id="WP_011360967.1">
    <property type="nucleotide sequence ID" value="NC_007513.1"/>
</dbReference>
<dbReference type="SMR" id="Q3AVT0"/>
<dbReference type="STRING" id="316279.Syncc9902_2232"/>
<dbReference type="KEGG" id="sye:Syncc9902_2232"/>
<dbReference type="eggNOG" id="COG0404">
    <property type="taxonomic scope" value="Bacteria"/>
</dbReference>
<dbReference type="HOGENOM" id="CLU_007884_10_2_3"/>
<dbReference type="OrthoDB" id="9774591at2"/>
<dbReference type="Proteomes" id="UP000002712">
    <property type="component" value="Chromosome"/>
</dbReference>
<dbReference type="GO" id="GO:0005829">
    <property type="term" value="C:cytosol"/>
    <property type="evidence" value="ECO:0007669"/>
    <property type="project" value="TreeGrafter"/>
</dbReference>
<dbReference type="GO" id="GO:0005960">
    <property type="term" value="C:glycine cleavage complex"/>
    <property type="evidence" value="ECO:0007669"/>
    <property type="project" value="InterPro"/>
</dbReference>
<dbReference type="GO" id="GO:0004047">
    <property type="term" value="F:aminomethyltransferase activity"/>
    <property type="evidence" value="ECO:0007669"/>
    <property type="project" value="UniProtKB-UniRule"/>
</dbReference>
<dbReference type="GO" id="GO:0008483">
    <property type="term" value="F:transaminase activity"/>
    <property type="evidence" value="ECO:0007669"/>
    <property type="project" value="UniProtKB-KW"/>
</dbReference>
<dbReference type="GO" id="GO:0019464">
    <property type="term" value="P:glycine decarboxylation via glycine cleavage system"/>
    <property type="evidence" value="ECO:0007669"/>
    <property type="project" value="UniProtKB-UniRule"/>
</dbReference>
<dbReference type="FunFam" id="2.40.30.110:FF:000003">
    <property type="entry name" value="Aminomethyltransferase"/>
    <property type="match status" value="1"/>
</dbReference>
<dbReference type="FunFam" id="3.30.70.1400:FF:000001">
    <property type="entry name" value="Aminomethyltransferase"/>
    <property type="match status" value="1"/>
</dbReference>
<dbReference type="FunFam" id="4.10.1250.10:FF:000001">
    <property type="entry name" value="Aminomethyltransferase"/>
    <property type="match status" value="1"/>
</dbReference>
<dbReference type="Gene3D" id="2.40.30.110">
    <property type="entry name" value="Aminomethyltransferase beta-barrel domains"/>
    <property type="match status" value="1"/>
</dbReference>
<dbReference type="Gene3D" id="3.30.70.1400">
    <property type="entry name" value="Aminomethyltransferase beta-barrel domains"/>
    <property type="match status" value="1"/>
</dbReference>
<dbReference type="Gene3D" id="4.10.1250.10">
    <property type="entry name" value="Aminomethyltransferase fragment"/>
    <property type="match status" value="1"/>
</dbReference>
<dbReference type="Gene3D" id="3.30.1360.120">
    <property type="entry name" value="Probable tRNA modification gtpase trme, domain 1"/>
    <property type="match status" value="1"/>
</dbReference>
<dbReference type="HAMAP" id="MF_00259">
    <property type="entry name" value="GcvT"/>
    <property type="match status" value="1"/>
</dbReference>
<dbReference type="InterPro" id="IPR006223">
    <property type="entry name" value="GCS_T"/>
</dbReference>
<dbReference type="InterPro" id="IPR022903">
    <property type="entry name" value="GCS_T_bac"/>
</dbReference>
<dbReference type="InterPro" id="IPR013977">
    <property type="entry name" value="GCST_C"/>
</dbReference>
<dbReference type="InterPro" id="IPR006222">
    <property type="entry name" value="GCV_T_N"/>
</dbReference>
<dbReference type="InterPro" id="IPR028896">
    <property type="entry name" value="GcvT/YgfZ/DmdA"/>
</dbReference>
<dbReference type="InterPro" id="IPR029043">
    <property type="entry name" value="GcvT/YgfZ_C"/>
</dbReference>
<dbReference type="InterPro" id="IPR027266">
    <property type="entry name" value="TrmE/GcvT_dom1"/>
</dbReference>
<dbReference type="NCBIfam" id="TIGR00528">
    <property type="entry name" value="gcvT"/>
    <property type="match status" value="1"/>
</dbReference>
<dbReference type="NCBIfam" id="NF001567">
    <property type="entry name" value="PRK00389.1"/>
    <property type="match status" value="1"/>
</dbReference>
<dbReference type="PANTHER" id="PTHR43757">
    <property type="entry name" value="AMINOMETHYLTRANSFERASE"/>
    <property type="match status" value="1"/>
</dbReference>
<dbReference type="PANTHER" id="PTHR43757:SF2">
    <property type="entry name" value="AMINOMETHYLTRANSFERASE, MITOCHONDRIAL"/>
    <property type="match status" value="1"/>
</dbReference>
<dbReference type="Pfam" id="PF01571">
    <property type="entry name" value="GCV_T"/>
    <property type="match status" value="1"/>
</dbReference>
<dbReference type="Pfam" id="PF08669">
    <property type="entry name" value="GCV_T_C"/>
    <property type="match status" value="1"/>
</dbReference>
<dbReference type="PIRSF" id="PIRSF006487">
    <property type="entry name" value="GcvT"/>
    <property type="match status" value="1"/>
</dbReference>
<dbReference type="SUPFAM" id="SSF101790">
    <property type="entry name" value="Aminomethyltransferase beta-barrel domain"/>
    <property type="match status" value="1"/>
</dbReference>
<dbReference type="SUPFAM" id="SSF103025">
    <property type="entry name" value="Folate-binding domain"/>
    <property type="match status" value="1"/>
</dbReference>
<keyword id="KW-0032">Aminotransferase</keyword>
<keyword id="KW-1185">Reference proteome</keyword>
<keyword id="KW-0808">Transferase</keyword>
<feature type="chain" id="PRO_1000047723" description="Aminomethyltransferase">
    <location>
        <begin position="1"/>
        <end position="365"/>
    </location>
</feature>
<sequence length="365" mass="39520">MLRTPLYELCRTGGGRMVPFAGWEMPVQFSGLIQEHKAVRNSVGMFDISHMGVLRLEGANPKDTLQQLVPSDLHRIGPGEACYTVLLNDQGGIRDDLIIYDLGAIDEKRGALVLVINAACADSDTAWIRERMEPAGLTVTDIKNNGVLLALQGPQAIPLLEQLSGEDLSGLPRFGHRDLQIQGLSNSVFTARTGYTGEDGAELLLTAEDGQLLWSQLLEKGVAPCGLGARDTLRLEAAMHLYGQDMNADTNPFEAGLGWLVHLEMPADFIGRQALERAAETGPNKRLVGLKLEGRAIARHDYPVLHNGEPVGVVTSGTWSPTLEEPIALASIPTALAKLGTNLSVEIRGKAQPATVVRRPFYKRP</sequence>
<proteinExistence type="inferred from homology"/>
<comment type="function">
    <text evidence="1">The glycine cleavage system catalyzes the degradation of glycine.</text>
</comment>
<comment type="catalytic activity">
    <reaction evidence="1">
        <text>N(6)-[(R)-S(8)-aminomethyldihydrolipoyl]-L-lysyl-[protein] + (6S)-5,6,7,8-tetrahydrofolate = N(6)-[(R)-dihydrolipoyl]-L-lysyl-[protein] + (6R)-5,10-methylene-5,6,7,8-tetrahydrofolate + NH4(+)</text>
        <dbReference type="Rhea" id="RHEA:16945"/>
        <dbReference type="Rhea" id="RHEA-COMP:10475"/>
        <dbReference type="Rhea" id="RHEA-COMP:10492"/>
        <dbReference type="ChEBI" id="CHEBI:15636"/>
        <dbReference type="ChEBI" id="CHEBI:28938"/>
        <dbReference type="ChEBI" id="CHEBI:57453"/>
        <dbReference type="ChEBI" id="CHEBI:83100"/>
        <dbReference type="ChEBI" id="CHEBI:83143"/>
        <dbReference type="EC" id="2.1.2.10"/>
    </reaction>
</comment>
<comment type="subunit">
    <text evidence="1">The glycine cleavage system is composed of four proteins: P, T, L and H.</text>
</comment>
<comment type="similarity">
    <text evidence="1">Belongs to the GcvT family.</text>
</comment>
<organism>
    <name type="scientific">Synechococcus sp. (strain CC9902)</name>
    <dbReference type="NCBI Taxonomy" id="316279"/>
    <lineage>
        <taxon>Bacteria</taxon>
        <taxon>Bacillati</taxon>
        <taxon>Cyanobacteriota</taxon>
        <taxon>Cyanophyceae</taxon>
        <taxon>Synechococcales</taxon>
        <taxon>Synechococcaceae</taxon>
        <taxon>Synechococcus</taxon>
    </lineage>
</organism>
<accession>Q3AVT0</accession>
<reference key="1">
    <citation type="submission" date="2005-08" db="EMBL/GenBank/DDBJ databases">
        <title>Complete sequence of Synechococcus sp. CC9902.</title>
        <authorList>
            <person name="Copeland A."/>
            <person name="Lucas S."/>
            <person name="Lapidus A."/>
            <person name="Barry K."/>
            <person name="Detter J.C."/>
            <person name="Glavina T."/>
            <person name="Hammon N."/>
            <person name="Israni S."/>
            <person name="Pitluck S."/>
            <person name="Martinez M."/>
            <person name="Schmutz J."/>
            <person name="Larimer F."/>
            <person name="Land M."/>
            <person name="Kyrpides N."/>
            <person name="Ivanova N."/>
            <person name="Richardson P."/>
        </authorList>
    </citation>
    <scope>NUCLEOTIDE SEQUENCE [LARGE SCALE GENOMIC DNA]</scope>
    <source>
        <strain>CC9902</strain>
    </source>
</reference>
<protein>
    <recommendedName>
        <fullName evidence="1">Aminomethyltransferase</fullName>
        <ecNumber evidence="1">2.1.2.10</ecNumber>
    </recommendedName>
    <alternativeName>
        <fullName evidence="1">Glycine cleavage system T protein</fullName>
    </alternativeName>
</protein>
<gene>
    <name evidence="1" type="primary">gcvT</name>
    <name type="ordered locus">Syncc9902_2232</name>
</gene>
<name>GCST_SYNS9</name>